<dbReference type="EC" id="1.2.1.38" evidence="1"/>
<dbReference type="EMBL" id="AE015451">
    <property type="protein sequence ID" value="AAN69233.1"/>
    <property type="molecule type" value="Genomic_DNA"/>
</dbReference>
<dbReference type="RefSeq" id="NP_745769.1">
    <property type="nucleotide sequence ID" value="NC_002947.4"/>
</dbReference>
<dbReference type="SMR" id="P59308"/>
<dbReference type="STRING" id="160488.PP_3633"/>
<dbReference type="PaxDb" id="160488-PP_3633"/>
<dbReference type="KEGG" id="ppu:PP_3633"/>
<dbReference type="PATRIC" id="fig|160488.4.peg.3866"/>
<dbReference type="eggNOG" id="COG0002">
    <property type="taxonomic scope" value="Bacteria"/>
</dbReference>
<dbReference type="HOGENOM" id="CLU_077118_0_0_6"/>
<dbReference type="OrthoDB" id="9801289at2"/>
<dbReference type="PhylomeDB" id="P59308"/>
<dbReference type="BioCyc" id="PPUT160488:G1G01-3871-MONOMER"/>
<dbReference type="UniPathway" id="UPA00068">
    <property type="reaction ID" value="UER00108"/>
</dbReference>
<dbReference type="Proteomes" id="UP000000556">
    <property type="component" value="Chromosome"/>
</dbReference>
<dbReference type="GO" id="GO:0005737">
    <property type="term" value="C:cytoplasm"/>
    <property type="evidence" value="ECO:0007669"/>
    <property type="project" value="UniProtKB-SubCell"/>
</dbReference>
<dbReference type="GO" id="GO:0003942">
    <property type="term" value="F:N-acetyl-gamma-glutamyl-phosphate reductase activity"/>
    <property type="evidence" value="ECO:0007669"/>
    <property type="project" value="UniProtKB-UniRule"/>
</dbReference>
<dbReference type="GO" id="GO:0051287">
    <property type="term" value="F:NAD binding"/>
    <property type="evidence" value="ECO:0007669"/>
    <property type="project" value="InterPro"/>
</dbReference>
<dbReference type="GO" id="GO:0006526">
    <property type="term" value="P:L-arginine biosynthetic process"/>
    <property type="evidence" value="ECO:0007669"/>
    <property type="project" value="UniProtKB-UniRule"/>
</dbReference>
<dbReference type="CDD" id="cd23935">
    <property type="entry name" value="AGPR_2_C"/>
    <property type="match status" value="1"/>
</dbReference>
<dbReference type="CDD" id="cd17896">
    <property type="entry name" value="AGPR_2_N"/>
    <property type="match status" value="1"/>
</dbReference>
<dbReference type="Gene3D" id="3.30.360.10">
    <property type="entry name" value="Dihydrodipicolinate Reductase, domain 2"/>
    <property type="match status" value="1"/>
</dbReference>
<dbReference type="Gene3D" id="3.40.50.720">
    <property type="entry name" value="NAD(P)-binding Rossmann-like Domain"/>
    <property type="match status" value="1"/>
</dbReference>
<dbReference type="HAMAP" id="MF_01110">
    <property type="entry name" value="ArgC_type2"/>
    <property type="match status" value="1"/>
</dbReference>
<dbReference type="InterPro" id="IPR023013">
    <property type="entry name" value="AGPR_AS"/>
</dbReference>
<dbReference type="InterPro" id="IPR010136">
    <property type="entry name" value="AGPR_type-2"/>
</dbReference>
<dbReference type="InterPro" id="IPR036291">
    <property type="entry name" value="NAD(P)-bd_dom_sf"/>
</dbReference>
<dbReference type="InterPro" id="IPR050085">
    <property type="entry name" value="NAGSA_dehydrogenase"/>
</dbReference>
<dbReference type="InterPro" id="IPR000534">
    <property type="entry name" value="Semialdehyde_DH_NAD-bd"/>
</dbReference>
<dbReference type="NCBIfam" id="TIGR01851">
    <property type="entry name" value="argC_other"/>
    <property type="match status" value="1"/>
</dbReference>
<dbReference type="PANTHER" id="PTHR32338:SF10">
    <property type="entry name" value="N-ACETYL-GAMMA-GLUTAMYL-PHOSPHATE REDUCTASE, CHLOROPLASTIC-RELATED"/>
    <property type="match status" value="1"/>
</dbReference>
<dbReference type="PANTHER" id="PTHR32338">
    <property type="entry name" value="N-ACETYL-GAMMA-GLUTAMYL-PHOSPHATE REDUCTASE, CHLOROPLASTIC-RELATED-RELATED"/>
    <property type="match status" value="1"/>
</dbReference>
<dbReference type="Pfam" id="PF01118">
    <property type="entry name" value="Semialdhyde_dh"/>
    <property type="match status" value="1"/>
</dbReference>
<dbReference type="Pfam" id="PF22698">
    <property type="entry name" value="Semialdhyde_dhC_1"/>
    <property type="match status" value="1"/>
</dbReference>
<dbReference type="SMART" id="SM00859">
    <property type="entry name" value="Semialdhyde_dh"/>
    <property type="match status" value="1"/>
</dbReference>
<dbReference type="SUPFAM" id="SSF55347">
    <property type="entry name" value="Glyceraldehyde-3-phosphate dehydrogenase-like, C-terminal domain"/>
    <property type="match status" value="1"/>
</dbReference>
<dbReference type="SUPFAM" id="SSF51735">
    <property type="entry name" value="NAD(P)-binding Rossmann-fold domains"/>
    <property type="match status" value="1"/>
</dbReference>
<dbReference type="PROSITE" id="PS01224">
    <property type="entry name" value="ARGC"/>
    <property type="match status" value="1"/>
</dbReference>
<protein>
    <recommendedName>
        <fullName evidence="1">N-acetyl-gamma-glutamyl-phosphate reductase 2</fullName>
        <shortName evidence="1">AGPR 2</shortName>
        <ecNumber evidence="1">1.2.1.38</ecNumber>
    </recommendedName>
    <alternativeName>
        <fullName evidence="1">N-acetyl-glutamate semialdehyde dehydrogenase 2</fullName>
        <shortName evidence="1">NAGSA dehydrogenase 2</shortName>
    </alternativeName>
</protein>
<gene>
    <name evidence="1" type="primary">argC2</name>
    <name type="ordered locus">PP_3633</name>
</gene>
<name>ARGC2_PSEPK</name>
<proteinExistence type="inferred from homology"/>
<comment type="function">
    <text evidence="1">Catalyzes the NADPH-dependent reduction of N-acetyl-5-glutamyl phosphate to yield N-acetyl-L-glutamate 5-semialdehyde.</text>
</comment>
<comment type="catalytic activity">
    <reaction evidence="1">
        <text>N-acetyl-L-glutamate 5-semialdehyde + phosphate + NADP(+) = N-acetyl-L-glutamyl 5-phosphate + NADPH + H(+)</text>
        <dbReference type="Rhea" id="RHEA:21588"/>
        <dbReference type="ChEBI" id="CHEBI:15378"/>
        <dbReference type="ChEBI" id="CHEBI:29123"/>
        <dbReference type="ChEBI" id="CHEBI:43474"/>
        <dbReference type="ChEBI" id="CHEBI:57783"/>
        <dbReference type="ChEBI" id="CHEBI:57936"/>
        <dbReference type="ChEBI" id="CHEBI:58349"/>
        <dbReference type="EC" id="1.2.1.38"/>
    </reaction>
</comment>
<comment type="pathway">
    <text evidence="1">Amino-acid biosynthesis; L-arginine biosynthesis; N(2)-acetyl-L-ornithine from L-glutamate: step 3/4.</text>
</comment>
<comment type="subcellular location">
    <subcellularLocation>
        <location evidence="1">Cytoplasm</location>
    </subcellularLocation>
</comment>
<comment type="similarity">
    <text evidence="1">Belongs to the NAGSA dehydrogenase family. Type 2 subfamily.</text>
</comment>
<sequence length="313" mass="33396">MHTPVVFIDGDQGTTGLQIHARLQGRSDLRLLTLPEAERKDPQRRCEAINSADIALLCLPDDAAREAVAAIHNPQVRVIDASSAHRTTPGWVYGLPELDEQQAERIAQSTRVSNPGCYPTGAIALLHPLVKAGLLPADYPLNIHAVSGYSGGGRAAVERHEQPGAAKAPALQLYGLELAHKHVPEIQQHAGLSARPMFMPGYGAYRQGIALSIPLQLRLLPGQVSAEHLQACLEQHYQGARHVQVMPLHQCGAAANLDPEALNGSNDLRLALYANPEHGQVLLTAVFDNLGKGASGAAVQNLDLMLGALQAHG</sequence>
<accession>P59308</accession>
<evidence type="ECO:0000255" key="1">
    <source>
        <dbReference type="HAMAP-Rule" id="MF_01110"/>
    </source>
</evidence>
<organism>
    <name type="scientific">Pseudomonas putida (strain ATCC 47054 / DSM 6125 / CFBP 8728 / NCIMB 11950 / KT2440)</name>
    <dbReference type="NCBI Taxonomy" id="160488"/>
    <lineage>
        <taxon>Bacteria</taxon>
        <taxon>Pseudomonadati</taxon>
        <taxon>Pseudomonadota</taxon>
        <taxon>Gammaproteobacteria</taxon>
        <taxon>Pseudomonadales</taxon>
        <taxon>Pseudomonadaceae</taxon>
        <taxon>Pseudomonas</taxon>
    </lineage>
</organism>
<reference key="1">
    <citation type="journal article" date="2002" name="Environ. Microbiol.">
        <title>Complete genome sequence and comparative analysis of the metabolically versatile Pseudomonas putida KT2440.</title>
        <authorList>
            <person name="Nelson K.E."/>
            <person name="Weinel C."/>
            <person name="Paulsen I.T."/>
            <person name="Dodson R.J."/>
            <person name="Hilbert H."/>
            <person name="Martins dos Santos V.A.P."/>
            <person name="Fouts D.E."/>
            <person name="Gill S.R."/>
            <person name="Pop M."/>
            <person name="Holmes M."/>
            <person name="Brinkac L.M."/>
            <person name="Beanan M.J."/>
            <person name="DeBoy R.T."/>
            <person name="Daugherty S.C."/>
            <person name="Kolonay J.F."/>
            <person name="Madupu R."/>
            <person name="Nelson W.C."/>
            <person name="White O."/>
            <person name="Peterson J.D."/>
            <person name="Khouri H.M."/>
            <person name="Hance I."/>
            <person name="Chris Lee P."/>
            <person name="Holtzapple E.K."/>
            <person name="Scanlan D."/>
            <person name="Tran K."/>
            <person name="Moazzez A."/>
            <person name="Utterback T.R."/>
            <person name="Rizzo M."/>
            <person name="Lee K."/>
            <person name="Kosack D."/>
            <person name="Moestl D."/>
            <person name="Wedler H."/>
            <person name="Lauber J."/>
            <person name="Stjepandic D."/>
            <person name="Hoheisel J."/>
            <person name="Straetz M."/>
            <person name="Heim S."/>
            <person name="Kiewitz C."/>
            <person name="Eisen J.A."/>
            <person name="Timmis K.N."/>
            <person name="Duesterhoeft A."/>
            <person name="Tuemmler B."/>
            <person name="Fraser C.M."/>
        </authorList>
    </citation>
    <scope>NUCLEOTIDE SEQUENCE [LARGE SCALE GENOMIC DNA]</scope>
    <source>
        <strain>ATCC 47054 / DSM 6125 / CFBP 8728 / NCIMB 11950 / KT2440</strain>
    </source>
</reference>
<feature type="chain" id="PRO_0000112508" description="N-acetyl-gamma-glutamyl-phosphate reductase 2">
    <location>
        <begin position="1"/>
        <end position="313"/>
    </location>
</feature>
<feature type="active site" evidence="1">
    <location>
        <position position="117"/>
    </location>
</feature>
<keyword id="KW-0028">Amino-acid biosynthesis</keyword>
<keyword id="KW-0055">Arginine biosynthesis</keyword>
<keyword id="KW-0963">Cytoplasm</keyword>
<keyword id="KW-0521">NADP</keyword>
<keyword id="KW-0560">Oxidoreductase</keyword>
<keyword id="KW-1185">Reference proteome</keyword>